<comment type="tissue specificity">
    <text>Calcified shell.</text>
</comment>
<comment type="mass spectrometry" mass="4975.6" method="Plasma desorption" evidence="1"/>
<evidence type="ECO:0000269" key="1">
    <source>
    </source>
</evidence>
<feature type="chain" id="PRO_0000196169" description="Cuticle protein CP498">
    <location>
        <begin position="1"/>
        <end position="50"/>
    </location>
</feature>
<feature type="repeat" description="1">
    <location>
        <begin position="6"/>
        <end position="23"/>
    </location>
</feature>
<feature type="repeat" description="2">
    <location>
        <begin position="30"/>
        <end position="47"/>
    </location>
</feature>
<protein>
    <recommendedName>
        <fullName>Cuticle protein CP498</fullName>
        <shortName>CPCP498</shortName>
    </recommendedName>
</protein>
<proteinExistence type="evidence at protein level"/>
<sequence length="50" mass="4980">AAPSKATVGESGIITPGGRLIQLPHGVSIILEGPSAALLSNGDFVTYESS</sequence>
<organism>
    <name type="scientific">Cancer pagurus</name>
    <name type="common">Rock crab</name>
    <dbReference type="NCBI Taxonomy" id="6755"/>
    <lineage>
        <taxon>Eukaryota</taxon>
        <taxon>Metazoa</taxon>
        <taxon>Ecdysozoa</taxon>
        <taxon>Arthropoda</taxon>
        <taxon>Crustacea</taxon>
        <taxon>Multicrustacea</taxon>
        <taxon>Malacostraca</taxon>
        <taxon>Eumalacostraca</taxon>
        <taxon>Eucarida</taxon>
        <taxon>Decapoda</taxon>
        <taxon>Pleocyemata</taxon>
        <taxon>Brachyura</taxon>
        <taxon>Eubrachyura</taxon>
        <taxon>Cancroidea</taxon>
        <taxon>Cancridae</taxon>
        <taxon>Cancer</taxon>
    </lineage>
</organism>
<dbReference type="SMR" id="P81588"/>
<dbReference type="GO" id="GO:0042302">
    <property type="term" value="F:structural constituent of cuticle"/>
    <property type="evidence" value="ECO:0007669"/>
    <property type="project" value="UniProtKB-KW"/>
</dbReference>
<dbReference type="InterPro" id="IPR012539">
    <property type="entry name" value="Cuticle_1"/>
</dbReference>
<dbReference type="Pfam" id="PF08140">
    <property type="entry name" value="Cuticle_1"/>
    <property type="match status" value="1"/>
</dbReference>
<name>CUC10_CANPG</name>
<reference key="1">
    <citation type="journal article" date="1999" name="Comp. Biochem. Physiol.">
        <title>Exoskeletal proteins from the crab, Cancer pagurus.</title>
        <authorList>
            <person name="Andersen S.O."/>
        </authorList>
    </citation>
    <scope>PROTEIN SEQUENCE</scope>
    <scope>MASS SPECTROMETRY</scope>
    <source>
        <tissue>Carapace cuticle</tissue>
    </source>
</reference>
<accession>P81588</accession>
<keyword id="KW-0193">Cuticle</keyword>
<keyword id="KW-0903">Direct protein sequencing</keyword>
<keyword id="KW-0677">Repeat</keyword>